<protein>
    <recommendedName>
        <fullName evidence="1">Large ribosomal subunit protein bL12</fullName>
    </recommendedName>
    <alternativeName>
        <fullName evidence="2">50S ribosomal protein L7/L12</fullName>
    </alternativeName>
</protein>
<evidence type="ECO:0000255" key="1">
    <source>
        <dbReference type="HAMAP-Rule" id="MF_00368"/>
    </source>
</evidence>
<evidence type="ECO:0000305" key="2"/>
<comment type="function">
    <text evidence="1">Forms part of the ribosomal stalk which helps the ribosome interact with GTP-bound translation factors. Is thus essential for accurate translation.</text>
</comment>
<comment type="subunit">
    <text evidence="1">Homodimer. Part of the ribosomal stalk of the 50S ribosomal subunit. Forms a multimeric L10(L12)X complex, where L10 forms an elongated spine to which 2 to 4 L12 dimers bind in a sequential fashion. Binds GTP-bound translation factors.</text>
</comment>
<comment type="similarity">
    <text evidence="1">Belongs to the bacterial ribosomal protein bL12 family.</text>
</comment>
<name>RL7_CAMJ8</name>
<reference key="1">
    <citation type="journal article" date="2007" name="J. Bacteriol.">
        <title>The complete genome sequence of Campylobacter jejuni strain 81116 (NCTC11828).</title>
        <authorList>
            <person name="Pearson B.M."/>
            <person name="Gaskin D.J.H."/>
            <person name="Segers R.P.A.M."/>
            <person name="Wells J.M."/>
            <person name="Nuijten P.J.M."/>
            <person name="van Vliet A.H.M."/>
        </authorList>
    </citation>
    <scope>NUCLEOTIDE SEQUENCE [LARGE SCALE GENOMIC DNA]</scope>
    <source>
        <strain>81116 / NCTC 11828</strain>
    </source>
</reference>
<feature type="chain" id="PRO_1000072112" description="Large ribosomal subunit protein bL12">
    <location>
        <begin position="1"/>
        <end position="125"/>
    </location>
</feature>
<gene>
    <name evidence="1" type="primary">rplL</name>
    <name type="ordered locus">C8J_0450</name>
</gene>
<accession>A8FKR2</accession>
<proteinExistence type="inferred from homology"/>
<keyword id="KW-0687">Ribonucleoprotein</keyword>
<keyword id="KW-0689">Ribosomal protein</keyword>
<dbReference type="EMBL" id="CP000814">
    <property type="protein sequence ID" value="ABV52049.1"/>
    <property type="molecule type" value="Genomic_DNA"/>
</dbReference>
<dbReference type="RefSeq" id="WP_002854820.1">
    <property type="nucleotide sequence ID" value="NC_009839.1"/>
</dbReference>
<dbReference type="SMR" id="A8FKR2"/>
<dbReference type="KEGG" id="cju:C8J_0450"/>
<dbReference type="HOGENOM" id="CLU_086499_3_0_7"/>
<dbReference type="GO" id="GO:0022625">
    <property type="term" value="C:cytosolic large ribosomal subunit"/>
    <property type="evidence" value="ECO:0007669"/>
    <property type="project" value="TreeGrafter"/>
</dbReference>
<dbReference type="GO" id="GO:0003729">
    <property type="term" value="F:mRNA binding"/>
    <property type="evidence" value="ECO:0007669"/>
    <property type="project" value="TreeGrafter"/>
</dbReference>
<dbReference type="GO" id="GO:0003735">
    <property type="term" value="F:structural constituent of ribosome"/>
    <property type="evidence" value="ECO:0007669"/>
    <property type="project" value="InterPro"/>
</dbReference>
<dbReference type="GO" id="GO:0006412">
    <property type="term" value="P:translation"/>
    <property type="evidence" value="ECO:0007669"/>
    <property type="project" value="UniProtKB-UniRule"/>
</dbReference>
<dbReference type="CDD" id="cd00387">
    <property type="entry name" value="Ribosomal_L7_L12"/>
    <property type="match status" value="1"/>
</dbReference>
<dbReference type="FunFam" id="3.30.1390.10:FF:000001">
    <property type="entry name" value="50S ribosomal protein L7/L12"/>
    <property type="match status" value="1"/>
</dbReference>
<dbReference type="Gene3D" id="3.30.1390.10">
    <property type="match status" value="1"/>
</dbReference>
<dbReference type="Gene3D" id="1.20.5.710">
    <property type="entry name" value="Single helix bin"/>
    <property type="match status" value="1"/>
</dbReference>
<dbReference type="HAMAP" id="MF_00368">
    <property type="entry name" value="Ribosomal_bL12"/>
    <property type="match status" value="1"/>
</dbReference>
<dbReference type="InterPro" id="IPR000206">
    <property type="entry name" value="Ribosomal_bL12"/>
</dbReference>
<dbReference type="InterPro" id="IPR013823">
    <property type="entry name" value="Ribosomal_bL12_C"/>
</dbReference>
<dbReference type="InterPro" id="IPR014719">
    <property type="entry name" value="Ribosomal_bL12_C/ClpS-like"/>
</dbReference>
<dbReference type="InterPro" id="IPR008932">
    <property type="entry name" value="Ribosomal_bL12_oligo"/>
</dbReference>
<dbReference type="InterPro" id="IPR036235">
    <property type="entry name" value="Ribosomal_bL12_oligo_N_sf"/>
</dbReference>
<dbReference type="NCBIfam" id="TIGR00855">
    <property type="entry name" value="L12"/>
    <property type="match status" value="1"/>
</dbReference>
<dbReference type="PANTHER" id="PTHR45987">
    <property type="entry name" value="39S RIBOSOMAL PROTEIN L12"/>
    <property type="match status" value="1"/>
</dbReference>
<dbReference type="PANTHER" id="PTHR45987:SF4">
    <property type="entry name" value="LARGE RIBOSOMAL SUBUNIT PROTEIN BL12M"/>
    <property type="match status" value="1"/>
</dbReference>
<dbReference type="Pfam" id="PF00542">
    <property type="entry name" value="Ribosomal_L12"/>
    <property type="match status" value="1"/>
</dbReference>
<dbReference type="Pfam" id="PF16320">
    <property type="entry name" value="Ribosomal_L12_N"/>
    <property type="match status" value="1"/>
</dbReference>
<dbReference type="SUPFAM" id="SSF54736">
    <property type="entry name" value="ClpS-like"/>
    <property type="match status" value="1"/>
</dbReference>
<dbReference type="SUPFAM" id="SSF48300">
    <property type="entry name" value="Ribosomal protein L7/12, oligomerisation (N-terminal) domain"/>
    <property type="match status" value="1"/>
</dbReference>
<organism>
    <name type="scientific">Campylobacter jejuni subsp. jejuni serotype O:6 (strain 81116 / NCTC 11828)</name>
    <dbReference type="NCBI Taxonomy" id="407148"/>
    <lineage>
        <taxon>Bacteria</taxon>
        <taxon>Pseudomonadati</taxon>
        <taxon>Campylobacterota</taxon>
        <taxon>Epsilonproteobacteria</taxon>
        <taxon>Campylobacterales</taxon>
        <taxon>Campylobacteraceae</taxon>
        <taxon>Campylobacter</taxon>
    </lineage>
</organism>
<sequence>MAISKEDVLEYISNLSVLELSELVKEFEEKFGVSAAPVMVAGGAAAGGAAAAAEEKTEFDIVLTDGGAKKIEVIKIVRALTGLGLKEAKDAVEQTPSTLKEGVAKAEAEEAKKQLEEAGAKVELK</sequence>